<sequence>MSLIELLFGRKQKTATVARDRLQIIIAQERAQEGQTPDYLPTLRKELMEVLSKYVNVSLDNIRISQEKQDGMDVLELNITLPEQKKV</sequence>
<organism>
    <name type="scientific">Neisseria gonorrhoeae</name>
    <dbReference type="NCBI Taxonomy" id="485"/>
    <lineage>
        <taxon>Bacteria</taxon>
        <taxon>Pseudomonadati</taxon>
        <taxon>Pseudomonadota</taxon>
        <taxon>Betaproteobacteria</taxon>
        <taxon>Neisseriales</taxon>
        <taxon>Neisseriaceae</taxon>
        <taxon>Neisseria</taxon>
    </lineage>
</organism>
<comment type="function">
    <text evidence="1">Prevents the cell division inhibition by proteins MinC and MinD at internal division sites while permitting inhibition at polar sites. This ensures cell division at the proper site by restricting the formation of a division septum at the midpoint of the long axis of the cell (By similarity).</text>
</comment>
<comment type="interaction">
    <interactant intactId="EBI-15883835">
        <id>P58152</id>
    </interactant>
    <interactant intactId="EBI-15883863">
        <id>Q9AG19</id>
        <label>minD</label>
    </interactant>
    <organismsDiffer>false</organismsDiffer>
    <experiments>2</experiments>
</comment>
<comment type="interaction">
    <interactant intactId="EBI-15883835">
        <id>P58152</id>
    </interactant>
    <interactant intactId="EBI-15883835">
        <id>P58152</id>
        <label>minE</label>
    </interactant>
    <organismsDiffer>false</organismsDiffer>
    <experiments>2</experiments>
</comment>
<comment type="similarity">
    <text evidence="2">Belongs to the MinE family.</text>
</comment>
<protein>
    <recommendedName>
        <fullName>Cell division topological specificity factor</fullName>
    </recommendedName>
</protein>
<name>MINE_NEIGO</name>
<evidence type="ECO:0000250" key="1"/>
<evidence type="ECO:0000305" key="2"/>
<evidence type="ECO:0007829" key="3">
    <source>
        <dbReference type="PDB" id="2KXO"/>
    </source>
</evidence>
<evidence type="ECO:0007829" key="4">
    <source>
        <dbReference type="PDB" id="6U6Q"/>
    </source>
</evidence>
<reference key="1">
    <citation type="journal article" date="2001" name="Microbiology">
        <title>Deletion of the cell-division inhibitor MinC results in lysis of Neisseria gonorrhoeae.</title>
        <authorList>
            <person name="Ramirez-Arcos S."/>
            <person name="Szeto J."/>
            <person name="Beveridge T."/>
            <person name="Victor C."/>
            <person name="Francis F."/>
            <person name="Dillon J."/>
        </authorList>
    </citation>
    <scope>NUCLEOTIDE SEQUENCE [GENOMIC DNA]</scope>
    <source>
        <strain>CH811</strain>
    </source>
</reference>
<keyword id="KW-0002">3D-structure</keyword>
<keyword id="KW-0131">Cell cycle</keyword>
<keyword id="KW-0132">Cell division</keyword>
<proteinExistence type="evidence at protein level"/>
<accession>P58152</accession>
<gene>
    <name type="primary">minE</name>
</gene>
<dbReference type="EMBL" id="AF345908">
    <property type="protein sequence ID" value="AAK30127.1"/>
    <property type="molecule type" value="Genomic_DNA"/>
</dbReference>
<dbReference type="RefSeq" id="WP_003690052.1">
    <property type="nucleotide sequence ID" value="NZ_WHPL01000002.1"/>
</dbReference>
<dbReference type="PDB" id="2KXO">
    <property type="method" value="NMR"/>
    <property type="chains" value="A/B=1-87"/>
</dbReference>
<dbReference type="PDB" id="6U6P">
    <property type="method" value="NMR"/>
    <property type="chains" value="A/B=1-81"/>
</dbReference>
<dbReference type="PDB" id="6U6Q">
    <property type="method" value="NMR"/>
    <property type="chains" value="A/B=11-87"/>
</dbReference>
<dbReference type="PDB" id="6U6R">
    <property type="method" value="NMR"/>
    <property type="chains" value="A/B=31-87"/>
</dbReference>
<dbReference type="PDB" id="6U6S">
    <property type="method" value="NMR"/>
    <property type="chains" value="A/B=11-87"/>
</dbReference>
<dbReference type="PDBsum" id="2KXO"/>
<dbReference type="PDBsum" id="6U6P"/>
<dbReference type="PDBsum" id="6U6Q"/>
<dbReference type="PDBsum" id="6U6R"/>
<dbReference type="PDBsum" id="6U6S"/>
<dbReference type="BMRB" id="P58152"/>
<dbReference type="SMR" id="P58152"/>
<dbReference type="DIP" id="DIP-59460N"/>
<dbReference type="IntAct" id="P58152">
    <property type="interactions" value="1"/>
</dbReference>
<dbReference type="GeneID" id="66754325"/>
<dbReference type="EvolutionaryTrace" id="P58152"/>
<dbReference type="GO" id="GO:0042802">
    <property type="term" value="F:identical protein binding"/>
    <property type="evidence" value="ECO:0000353"/>
    <property type="project" value="IntAct"/>
</dbReference>
<dbReference type="GO" id="GO:0051301">
    <property type="term" value="P:cell division"/>
    <property type="evidence" value="ECO:0007669"/>
    <property type="project" value="UniProtKB-KW"/>
</dbReference>
<dbReference type="GO" id="GO:0032955">
    <property type="term" value="P:regulation of division septum assembly"/>
    <property type="evidence" value="ECO:0007669"/>
    <property type="project" value="InterPro"/>
</dbReference>
<dbReference type="FunFam" id="3.30.1070.10:FF:000001">
    <property type="entry name" value="Cell division topological specificity factor"/>
    <property type="match status" value="1"/>
</dbReference>
<dbReference type="Gene3D" id="3.30.1070.10">
    <property type="entry name" value="Cell division topological specificity factor MinE"/>
    <property type="match status" value="1"/>
</dbReference>
<dbReference type="HAMAP" id="MF_00262">
    <property type="entry name" value="MinE"/>
    <property type="match status" value="1"/>
</dbReference>
<dbReference type="InterPro" id="IPR005527">
    <property type="entry name" value="MinE"/>
</dbReference>
<dbReference type="InterPro" id="IPR036707">
    <property type="entry name" value="MinE_sf"/>
</dbReference>
<dbReference type="NCBIfam" id="TIGR01215">
    <property type="entry name" value="minE"/>
    <property type="match status" value="1"/>
</dbReference>
<dbReference type="NCBIfam" id="NF001422">
    <property type="entry name" value="PRK00296.1"/>
    <property type="match status" value="1"/>
</dbReference>
<dbReference type="NCBIfam" id="NF010595">
    <property type="entry name" value="PRK13989.1"/>
    <property type="match status" value="1"/>
</dbReference>
<dbReference type="Pfam" id="PF03776">
    <property type="entry name" value="MinE"/>
    <property type="match status" value="1"/>
</dbReference>
<dbReference type="SUPFAM" id="SSF55229">
    <property type="entry name" value="Cell division protein MinE topological specificity domain"/>
    <property type="match status" value="1"/>
</dbReference>
<feature type="chain" id="PRO_0000205879" description="Cell division topological specificity factor">
    <location>
        <begin position="1"/>
        <end position="87"/>
    </location>
</feature>
<feature type="helix" evidence="3">
    <location>
        <begin position="3"/>
        <end position="7"/>
    </location>
</feature>
<feature type="strand" evidence="3">
    <location>
        <begin position="18"/>
        <end position="30"/>
    </location>
</feature>
<feature type="strand" evidence="4">
    <location>
        <begin position="33"/>
        <end position="35"/>
    </location>
</feature>
<feature type="helix" evidence="3">
    <location>
        <begin position="40"/>
        <end position="54"/>
    </location>
</feature>
<feature type="strand" evidence="3">
    <location>
        <begin position="61"/>
        <end position="69"/>
    </location>
</feature>
<feature type="strand" evidence="3">
    <location>
        <begin position="72"/>
        <end position="81"/>
    </location>
</feature>